<comment type="function">
    <text evidence="1">Catalyzes the initial step of the lipid cycle reactions in the biosynthesis of the cell wall peptidoglycan: transfers peptidoglycan precursor phospho-MurNAc-pentapeptide from UDP-MurNAc-pentapeptide onto the lipid carrier undecaprenyl phosphate, yielding undecaprenyl-pyrophosphoryl-MurNAc-pentapeptide, known as lipid I.</text>
</comment>
<comment type="catalytic activity">
    <reaction evidence="1">
        <text>UDP-N-acetyl-alpha-D-muramoyl-L-alanyl-gamma-D-glutamyl-L-lysyl-D-alanyl-D-alanine + di-trans,octa-cis-undecaprenyl phosphate = Mur2Ac(oyl-L-Ala-gamma-D-Glu-L-Lys-D-Ala-D-Ala)-di-trans,octa-cis-undecaprenyl diphosphate + UMP</text>
        <dbReference type="Rhea" id="RHEA:21920"/>
        <dbReference type="ChEBI" id="CHEBI:57865"/>
        <dbReference type="ChEBI" id="CHEBI:60032"/>
        <dbReference type="ChEBI" id="CHEBI:60392"/>
        <dbReference type="ChEBI" id="CHEBI:70758"/>
        <dbReference type="EC" id="2.7.8.13"/>
    </reaction>
</comment>
<comment type="cofactor">
    <cofactor evidence="1">
        <name>Mg(2+)</name>
        <dbReference type="ChEBI" id="CHEBI:18420"/>
    </cofactor>
</comment>
<comment type="pathway">
    <text evidence="1">Cell wall biogenesis; peptidoglycan biosynthesis.</text>
</comment>
<comment type="subcellular location">
    <subcellularLocation>
        <location evidence="1">Cell membrane</location>
        <topology evidence="1">Multi-pass membrane protein</topology>
    </subcellularLocation>
</comment>
<comment type="similarity">
    <text evidence="1">Belongs to the glycosyltransferase 4 family. MraY subfamily.</text>
</comment>
<organism>
    <name type="scientific">Staphylococcus aureus (strain JH1)</name>
    <dbReference type="NCBI Taxonomy" id="359787"/>
    <lineage>
        <taxon>Bacteria</taxon>
        <taxon>Bacillati</taxon>
        <taxon>Bacillota</taxon>
        <taxon>Bacilli</taxon>
        <taxon>Bacillales</taxon>
        <taxon>Staphylococcaceae</taxon>
        <taxon>Staphylococcus</taxon>
    </lineage>
</organism>
<protein>
    <recommendedName>
        <fullName evidence="1">Phospho-N-acetylmuramoyl-pentapeptide-transferase</fullName>
        <ecNumber evidence="1">2.7.8.13</ecNumber>
    </recommendedName>
    <alternativeName>
        <fullName evidence="1">UDP-MurNAc-pentapeptide phosphotransferase</fullName>
    </alternativeName>
</protein>
<dbReference type="EC" id="2.7.8.13" evidence="1"/>
<dbReference type="EMBL" id="CP000736">
    <property type="protein sequence ID" value="ABR52120.1"/>
    <property type="molecule type" value="Genomic_DNA"/>
</dbReference>
<dbReference type="SMR" id="A6U102"/>
<dbReference type="KEGG" id="sah:SaurJH1_1266"/>
<dbReference type="HOGENOM" id="CLU_023982_0_1_9"/>
<dbReference type="UniPathway" id="UPA00219"/>
<dbReference type="GO" id="GO:0005886">
    <property type="term" value="C:plasma membrane"/>
    <property type="evidence" value="ECO:0007669"/>
    <property type="project" value="UniProtKB-SubCell"/>
</dbReference>
<dbReference type="GO" id="GO:0046872">
    <property type="term" value="F:metal ion binding"/>
    <property type="evidence" value="ECO:0007669"/>
    <property type="project" value="UniProtKB-KW"/>
</dbReference>
<dbReference type="GO" id="GO:0008963">
    <property type="term" value="F:phospho-N-acetylmuramoyl-pentapeptide-transferase activity"/>
    <property type="evidence" value="ECO:0007669"/>
    <property type="project" value="UniProtKB-UniRule"/>
</dbReference>
<dbReference type="GO" id="GO:0051301">
    <property type="term" value="P:cell division"/>
    <property type="evidence" value="ECO:0007669"/>
    <property type="project" value="UniProtKB-KW"/>
</dbReference>
<dbReference type="GO" id="GO:0071555">
    <property type="term" value="P:cell wall organization"/>
    <property type="evidence" value="ECO:0007669"/>
    <property type="project" value="UniProtKB-KW"/>
</dbReference>
<dbReference type="GO" id="GO:0009252">
    <property type="term" value="P:peptidoglycan biosynthetic process"/>
    <property type="evidence" value="ECO:0007669"/>
    <property type="project" value="UniProtKB-UniRule"/>
</dbReference>
<dbReference type="GO" id="GO:0008360">
    <property type="term" value="P:regulation of cell shape"/>
    <property type="evidence" value="ECO:0007669"/>
    <property type="project" value="UniProtKB-KW"/>
</dbReference>
<dbReference type="CDD" id="cd06852">
    <property type="entry name" value="GT_MraY"/>
    <property type="match status" value="1"/>
</dbReference>
<dbReference type="HAMAP" id="MF_00038">
    <property type="entry name" value="MraY"/>
    <property type="match status" value="1"/>
</dbReference>
<dbReference type="InterPro" id="IPR000715">
    <property type="entry name" value="Glycosyl_transferase_4"/>
</dbReference>
<dbReference type="InterPro" id="IPR003524">
    <property type="entry name" value="PNAcMuramoyl-5peptid_Trfase"/>
</dbReference>
<dbReference type="InterPro" id="IPR018480">
    <property type="entry name" value="PNAcMuramoyl-5peptid_Trfase_CS"/>
</dbReference>
<dbReference type="NCBIfam" id="TIGR00445">
    <property type="entry name" value="mraY"/>
    <property type="match status" value="1"/>
</dbReference>
<dbReference type="PANTHER" id="PTHR22926">
    <property type="entry name" value="PHOSPHO-N-ACETYLMURAMOYL-PENTAPEPTIDE-TRANSFERASE"/>
    <property type="match status" value="1"/>
</dbReference>
<dbReference type="PANTHER" id="PTHR22926:SF5">
    <property type="entry name" value="PHOSPHO-N-ACETYLMURAMOYL-PENTAPEPTIDE-TRANSFERASE HOMOLOG"/>
    <property type="match status" value="1"/>
</dbReference>
<dbReference type="Pfam" id="PF00953">
    <property type="entry name" value="Glycos_transf_4"/>
    <property type="match status" value="1"/>
</dbReference>
<dbReference type="PROSITE" id="PS01347">
    <property type="entry name" value="MRAY_1"/>
    <property type="match status" value="1"/>
</dbReference>
<dbReference type="PROSITE" id="PS01348">
    <property type="entry name" value="MRAY_2"/>
    <property type="match status" value="1"/>
</dbReference>
<keyword id="KW-0131">Cell cycle</keyword>
<keyword id="KW-0132">Cell division</keyword>
<keyword id="KW-1003">Cell membrane</keyword>
<keyword id="KW-0133">Cell shape</keyword>
<keyword id="KW-0961">Cell wall biogenesis/degradation</keyword>
<keyword id="KW-0460">Magnesium</keyword>
<keyword id="KW-0472">Membrane</keyword>
<keyword id="KW-0479">Metal-binding</keyword>
<keyword id="KW-0573">Peptidoglycan synthesis</keyword>
<keyword id="KW-0808">Transferase</keyword>
<keyword id="KW-0812">Transmembrane</keyword>
<keyword id="KW-1133">Transmembrane helix</keyword>
<feature type="chain" id="PRO_1000074564" description="Phospho-N-acetylmuramoyl-pentapeptide-transferase">
    <location>
        <begin position="1"/>
        <end position="321"/>
    </location>
</feature>
<feature type="transmembrane region" description="Helical" evidence="1">
    <location>
        <begin position="1"/>
        <end position="21"/>
    </location>
</feature>
<feature type="transmembrane region" description="Helical" evidence="1">
    <location>
        <begin position="50"/>
        <end position="70"/>
    </location>
</feature>
<feature type="transmembrane region" description="Helical" evidence="1">
    <location>
        <begin position="76"/>
        <end position="96"/>
    </location>
</feature>
<feature type="transmembrane region" description="Helical" evidence="1">
    <location>
        <begin position="112"/>
        <end position="132"/>
    </location>
</feature>
<feature type="transmembrane region" description="Helical" evidence="1">
    <location>
        <begin position="140"/>
        <end position="160"/>
    </location>
</feature>
<feature type="transmembrane region" description="Helical" evidence="1">
    <location>
        <begin position="176"/>
        <end position="196"/>
    </location>
</feature>
<feature type="transmembrane region" description="Helical" evidence="1">
    <location>
        <begin position="200"/>
        <end position="220"/>
    </location>
</feature>
<feature type="transmembrane region" description="Helical" evidence="1">
    <location>
        <begin position="225"/>
        <end position="245"/>
    </location>
</feature>
<feature type="transmembrane region" description="Helical" evidence="1">
    <location>
        <begin position="250"/>
        <end position="270"/>
    </location>
</feature>
<feature type="transmembrane region" description="Helical" evidence="1">
    <location>
        <begin position="300"/>
        <end position="320"/>
    </location>
</feature>
<accession>A6U102</accession>
<evidence type="ECO:0000255" key="1">
    <source>
        <dbReference type="HAMAP-Rule" id="MF_00038"/>
    </source>
</evidence>
<sequence length="321" mass="35232">MIFVYALLALVITFVLVPVLIPTLKRMKFGQSIREEGPQSHMKKTGTPTMGGLTFLLSIVITSLVAIIFVDQANPIILLLFVTIGFGLIGFIDDYIIVVKKNNQGLTSKQKFLAQIGIAIIFFVLSNVFHLVNFSTSIHIPFTNVAIPLSFAYVIFIVFWQVGFSNAVNLTDGLDGLATGLSIIGFTMYAIMSFVLGETAIGIFCIIMLFALLGFLPYNINPAKVFMGDTGSLALGGIFATISIMLNQELSLIFIGLVFVIETLSVMLQVASFKLTGKRIFKMSPIHHHFELIGWSEWKVVTVFWAVGLISGLIGLWIGVH</sequence>
<proteinExistence type="inferred from homology"/>
<reference key="1">
    <citation type="submission" date="2007-06" db="EMBL/GenBank/DDBJ databases">
        <title>Complete sequence of chromosome of Staphylococcus aureus subsp. aureus JH1.</title>
        <authorList>
            <consortium name="US DOE Joint Genome Institute"/>
            <person name="Copeland A."/>
            <person name="Lucas S."/>
            <person name="Lapidus A."/>
            <person name="Barry K."/>
            <person name="Detter J.C."/>
            <person name="Glavina del Rio T."/>
            <person name="Hammon N."/>
            <person name="Israni S."/>
            <person name="Dalin E."/>
            <person name="Tice H."/>
            <person name="Pitluck S."/>
            <person name="Chain P."/>
            <person name="Malfatti S."/>
            <person name="Shin M."/>
            <person name="Vergez L."/>
            <person name="Schmutz J."/>
            <person name="Larimer F."/>
            <person name="Land M."/>
            <person name="Hauser L."/>
            <person name="Kyrpides N."/>
            <person name="Ivanova N."/>
            <person name="Tomasz A."/>
            <person name="Richardson P."/>
        </authorList>
    </citation>
    <scope>NUCLEOTIDE SEQUENCE [LARGE SCALE GENOMIC DNA]</scope>
    <source>
        <strain>JH1</strain>
    </source>
</reference>
<name>MRAY_STAA2</name>
<gene>
    <name evidence="1" type="primary">mraY</name>
    <name type="ordered locus">SaurJH1_1266</name>
</gene>